<dbReference type="EMBL" id="F14544">
    <property type="protein sequence ID" value="CAA23118.1"/>
    <property type="molecule type" value="mRNA"/>
</dbReference>
<dbReference type="SMR" id="Q29257"/>
<dbReference type="STRING" id="9823.ENSSSCP00000052017"/>
<dbReference type="GlyCosmos" id="Q29257">
    <property type="glycosylation" value="1 site, No reported glycans"/>
</dbReference>
<dbReference type="GlyGen" id="Q29257">
    <property type="glycosylation" value="1 site"/>
</dbReference>
<dbReference type="PaxDb" id="9823-ENSSSCP00000026670"/>
<dbReference type="eggNOG" id="KOG3882">
    <property type="taxonomic scope" value="Eukaryota"/>
</dbReference>
<dbReference type="InParanoid" id="Q29257"/>
<dbReference type="Proteomes" id="UP000008227">
    <property type="component" value="Unplaced"/>
</dbReference>
<dbReference type="Proteomes" id="UP000314985">
    <property type="component" value="Unplaced"/>
</dbReference>
<dbReference type="Proteomes" id="UP000694570">
    <property type="component" value="Unplaced"/>
</dbReference>
<dbReference type="Proteomes" id="UP000694571">
    <property type="component" value="Unplaced"/>
</dbReference>
<dbReference type="Proteomes" id="UP000694720">
    <property type="component" value="Unplaced"/>
</dbReference>
<dbReference type="Proteomes" id="UP000694722">
    <property type="component" value="Unplaced"/>
</dbReference>
<dbReference type="Proteomes" id="UP000694723">
    <property type="component" value="Unplaced"/>
</dbReference>
<dbReference type="Proteomes" id="UP000694724">
    <property type="component" value="Unplaced"/>
</dbReference>
<dbReference type="Proteomes" id="UP000694725">
    <property type="component" value="Unplaced"/>
</dbReference>
<dbReference type="Proteomes" id="UP000694726">
    <property type="component" value="Unplaced"/>
</dbReference>
<dbReference type="Proteomes" id="UP000694727">
    <property type="component" value="Unplaced"/>
</dbReference>
<dbReference type="Proteomes" id="UP000694728">
    <property type="component" value="Unplaced"/>
</dbReference>
<dbReference type="GO" id="GO:0016020">
    <property type="term" value="C:membrane"/>
    <property type="evidence" value="ECO:0007669"/>
    <property type="project" value="UniProtKB-SubCell"/>
</dbReference>
<dbReference type="InterPro" id="IPR018499">
    <property type="entry name" value="Tetraspanin/Peripherin"/>
</dbReference>
<dbReference type="Pfam" id="PF00335">
    <property type="entry name" value="Tetraspanin"/>
    <property type="match status" value="1"/>
</dbReference>
<dbReference type="PRINTS" id="PR00259">
    <property type="entry name" value="TMFOUR"/>
</dbReference>
<sequence>MVCGGFACSKNALCALNVVYMLVGLLLIGVAAWAKGLGLVSSIHIIGGVIAVGVFLLLIAVAGLVGAVNHHQVLLFFYMIILGLVFIFQFGISCSCLAINLSKQAGIIN</sequence>
<feature type="chain" id="PRO_0000219272" description="Tetraspanin-31">
    <location>
        <begin position="1"/>
        <end position="109" status="greater than"/>
    </location>
</feature>
<feature type="topological domain" description="Cytoplasmic" evidence="1">
    <location>
        <begin position="1"/>
        <end position="12"/>
    </location>
</feature>
<feature type="transmembrane region" description="Helical" evidence="1">
    <location>
        <begin position="13"/>
        <end position="33"/>
    </location>
</feature>
<feature type="topological domain" description="Extracellular" evidence="1">
    <location>
        <begin position="34"/>
        <end position="44"/>
    </location>
</feature>
<feature type="transmembrane region" description="Helical" evidence="1">
    <location>
        <begin position="45"/>
        <end position="65"/>
    </location>
</feature>
<feature type="topological domain" description="Cytoplasmic" evidence="1">
    <location>
        <begin position="66"/>
        <end position="72"/>
    </location>
</feature>
<feature type="transmembrane region" description="Helical" evidence="1">
    <location>
        <begin position="73"/>
        <end position="93"/>
    </location>
</feature>
<feature type="topological domain" description="Extracellular" evidence="1">
    <location>
        <begin position="94"/>
        <end position="109" status="greater than"/>
    </location>
</feature>
<feature type="glycosylation site" description="N-linked (GlcNAc...) asparagine" evidence="1">
    <location>
        <position position="100"/>
    </location>
</feature>
<feature type="non-terminal residue">
    <location>
        <position position="109"/>
    </location>
</feature>
<comment type="subcellular location">
    <subcellularLocation>
        <location>Membrane</location>
        <topology>Multi-pass membrane protein</topology>
    </subcellularLocation>
</comment>
<comment type="similarity">
    <text evidence="2">Belongs to the tetraspanin (TM4SF) family.</text>
</comment>
<name>TSN31_PIG</name>
<reference key="1">
    <citation type="journal article" date="1996" name="Mamm. Genome">
        <title>Evaluation and characterization of a porcine small intestine cDNA library: analysis of 839 clones.</title>
        <authorList>
            <person name="Winteroe A.K."/>
            <person name="Fredholm M."/>
            <person name="Davies W."/>
        </authorList>
    </citation>
    <scope>NUCLEOTIDE SEQUENCE [LARGE SCALE MRNA]</scope>
    <source>
        <tissue>Small intestine</tissue>
    </source>
</reference>
<organism>
    <name type="scientific">Sus scrofa</name>
    <name type="common">Pig</name>
    <dbReference type="NCBI Taxonomy" id="9823"/>
    <lineage>
        <taxon>Eukaryota</taxon>
        <taxon>Metazoa</taxon>
        <taxon>Chordata</taxon>
        <taxon>Craniata</taxon>
        <taxon>Vertebrata</taxon>
        <taxon>Euteleostomi</taxon>
        <taxon>Mammalia</taxon>
        <taxon>Eutheria</taxon>
        <taxon>Laurasiatheria</taxon>
        <taxon>Artiodactyla</taxon>
        <taxon>Suina</taxon>
        <taxon>Suidae</taxon>
        <taxon>Sus</taxon>
    </lineage>
</organism>
<gene>
    <name type="primary">TSPAN31</name>
    <name type="synonym">SAS</name>
</gene>
<keyword id="KW-0325">Glycoprotein</keyword>
<keyword id="KW-0472">Membrane</keyword>
<keyword id="KW-1185">Reference proteome</keyword>
<keyword id="KW-0812">Transmembrane</keyword>
<keyword id="KW-1133">Transmembrane helix</keyword>
<proteinExistence type="evidence at transcript level"/>
<protein>
    <recommendedName>
        <fullName>Tetraspanin-31</fullName>
        <shortName>Tspan-31</shortName>
    </recommendedName>
    <alternativeName>
        <fullName>Sarcoma-amplified sequence homolog</fullName>
    </alternativeName>
</protein>
<accession>Q29257</accession>
<evidence type="ECO:0000255" key="1"/>
<evidence type="ECO:0000305" key="2"/>